<evidence type="ECO:0000250" key="1">
    <source>
        <dbReference type="UniProtKB" id="O60381"/>
    </source>
</evidence>
<evidence type="ECO:0000250" key="2">
    <source>
        <dbReference type="UniProtKB" id="Q8R316"/>
    </source>
</evidence>
<evidence type="ECO:0000255" key="3">
    <source>
        <dbReference type="PROSITE-ProRule" id="PRU00267"/>
    </source>
</evidence>
<evidence type="ECO:0000255" key="4">
    <source>
        <dbReference type="PROSITE-ProRule" id="PRU00496"/>
    </source>
</evidence>
<evidence type="ECO:0000256" key="5">
    <source>
        <dbReference type="SAM" id="MobiDB-lite"/>
    </source>
</evidence>
<evidence type="ECO:0000269" key="6">
    <source>
    </source>
</evidence>
<evidence type="ECO:0000305" key="7"/>
<proteinExistence type="evidence at protein level"/>
<name>HBP1_RAT</name>
<dbReference type="EMBL" id="U09551">
    <property type="protein sequence ID" value="AAA53240.1"/>
    <property type="molecule type" value="mRNA"/>
</dbReference>
<dbReference type="EMBL" id="BC091165">
    <property type="protein sequence ID" value="AAH91165.1"/>
    <property type="molecule type" value="mRNA"/>
</dbReference>
<dbReference type="PIR" id="I58311">
    <property type="entry name" value="I58311"/>
</dbReference>
<dbReference type="RefSeq" id="NP_037353.2">
    <property type="nucleotide sequence ID" value="NM_013221.2"/>
</dbReference>
<dbReference type="BMRB" id="Q62661"/>
<dbReference type="SMR" id="Q62661"/>
<dbReference type="FunCoup" id="Q62661">
    <property type="interactions" value="1953"/>
</dbReference>
<dbReference type="STRING" id="10116.ENSRNOP00000012004"/>
<dbReference type="iPTMnet" id="Q62661"/>
<dbReference type="PhosphoSitePlus" id="Q62661"/>
<dbReference type="PaxDb" id="10116-ENSRNOP00000012004"/>
<dbReference type="GeneID" id="27080"/>
<dbReference type="KEGG" id="rno:27080"/>
<dbReference type="AGR" id="RGD:620444"/>
<dbReference type="CTD" id="26959"/>
<dbReference type="RGD" id="620444">
    <property type="gene designation" value="Hbp1"/>
</dbReference>
<dbReference type="eggNOG" id="ENOG502QR1P">
    <property type="taxonomic scope" value="Eukaryota"/>
</dbReference>
<dbReference type="InParanoid" id="Q62661"/>
<dbReference type="OrthoDB" id="28611at9989"/>
<dbReference type="PhylomeDB" id="Q62661"/>
<dbReference type="TreeFam" id="TF105381"/>
<dbReference type="PRO" id="PR:Q62661"/>
<dbReference type="Proteomes" id="UP000002494">
    <property type="component" value="Unplaced"/>
</dbReference>
<dbReference type="GO" id="GO:0005634">
    <property type="term" value="C:nucleus"/>
    <property type="evidence" value="ECO:0000318"/>
    <property type="project" value="GO_Central"/>
</dbReference>
<dbReference type="GO" id="GO:0000981">
    <property type="term" value="F:DNA-binding transcription factor activity, RNA polymerase II-specific"/>
    <property type="evidence" value="ECO:0000318"/>
    <property type="project" value="GO_Central"/>
</dbReference>
<dbReference type="GO" id="GO:0001227">
    <property type="term" value="F:DNA-binding transcription repressor activity, RNA polymerase II-specific"/>
    <property type="evidence" value="ECO:0000314"/>
    <property type="project" value="NTNU_SB"/>
</dbReference>
<dbReference type="GO" id="GO:0003723">
    <property type="term" value="F:RNA binding"/>
    <property type="evidence" value="ECO:0007669"/>
    <property type="project" value="InterPro"/>
</dbReference>
<dbReference type="GO" id="GO:0000978">
    <property type="term" value="F:RNA polymerase II cis-regulatory region sequence-specific DNA binding"/>
    <property type="evidence" value="ECO:0000314"/>
    <property type="project" value="NTNU_SB"/>
</dbReference>
<dbReference type="GO" id="GO:0032369">
    <property type="term" value="P:negative regulation of lipid transport"/>
    <property type="evidence" value="ECO:0000266"/>
    <property type="project" value="RGD"/>
</dbReference>
<dbReference type="GO" id="GO:1903427">
    <property type="term" value="P:negative regulation of reactive oxygen species biosynthetic process"/>
    <property type="evidence" value="ECO:0000266"/>
    <property type="project" value="RGD"/>
</dbReference>
<dbReference type="GO" id="GO:0000122">
    <property type="term" value="P:negative regulation of transcription by RNA polymerase II"/>
    <property type="evidence" value="ECO:0000314"/>
    <property type="project" value="NTNU_SB"/>
</dbReference>
<dbReference type="GO" id="GO:0043268">
    <property type="term" value="P:positive regulation of potassium ion transport"/>
    <property type="evidence" value="ECO:0000314"/>
    <property type="project" value="RGD"/>
</dbReference>
<dbReference type="GO" id="GO:0006355">
    <property type="term" value="P:regulation of DNA-templated transcription"/>
    <property type="evidence" value="ECO:0000303"/>
    <property type="project" value="UniProtKB"/>
</dbReference>
<dbReference type="GO" id="GO:0006357">
    <property type="term" value="P:regulation of transcription by RNA polymerase II"/>
    <property type="evidence" value="ECO:0000318"/>
    <property type="project" value="GO_Central"/>
</dbReference>
<dbReference type="GO" id="GO:0016055">
    <property type="term" value="P:Wnt signaling pathway"/>
    <property type="evidence" value="ECO:0007669"/>
    <property type="project" value="UniProtKB-KW"/>
</dbReference>
<dbReference type="CDD" id="cd21988">
    <property type="entry name" value="HMG-box_HBP1"/>
    <property type="match status" value="1"/>
</dbReference>
<dbReference type="FunFam" id="1.10.30.10:FF:000020">
    <property type="entry name" value="HMG box-containing protein 1"/>
    <property type="match status" value="1"/>
</dbReference>
<dbReference type="Gene3D" id="1.10.30.10">
    <property type="entry name" value="High mobility group box domain"/>
    <property type="match status" value="1"/>
</dbReference>
<dbReference type="InterPro" id="IPR003652">
    <property type="entry name" value="Ataxin_AXH_dom"/>
</dbReference>
<dbReference type="InterPro" id="IPR036096">
    <property type="entry name" value="Ataxin_AXH_dom_sf"/>
</dbReference>
<dbReference type="InterPro" id="IPR039655">
    <property type="entry name" value="HBP1"/>
</dbReference>
<dbReference type="InterPro" id="IPR009071">
    <property type="entry name" value="HMG_box_dom"/>
</dbReference>
<dbReference type="InterPro" id="IPR036910">
    <property type="entry name" value="HMG_box_dom_sf"/>
</dbReference>
<dbReference type="PANTHER" id="PTHR15499">
    <property type="entry name" value="HMG BOX-CONTAINING PROTEIN 1"/>
    <property type="match status" value="1"/>
</dbReference>
<dbReference type="PANTHER" id="PTHR15499:SF3">
    <property type="entry name" value="HMG BOX-CONTAINING PROTEIN 1"/>
    <property type="match status" value="1"/>
</dbReference>
<dbReference type="Pfam" id="PF08517">
    <property type="entry name" value="AXH"/>
    <property type="match status" value="1"/>
</dbReference>
<dbReference type="Pfam" id="PF00505">
    <property type="entry name" value="HMG_box"/>
    <property type="match status" value="1"/>
</dbReference>
<dbReference type="SMART" id="SM00536">
    <property type="entry name" value="AXH"/>
    <property type="match status" value="1"/>
</dbReference>
<dbReference type="SMART" id="SM00398">
    <property type="entry name" value="HMG"/>
    <property type="match status" value="1"/>
</dbReference>
<dbReference type="SUPFAM" id="SSF102031">
    <property type="entry name" value="AXH domain"/>
    <property type="match status" value="1"/>
</dbReference>
<dbReference type="SUPFAM" id="SSF47095">
    <property type="entry name" value="HMG-box"/>
    <property type="match status" value="1"/>
</dbReference>
<dbReference type="PROSITE" id="PS51148">
    <property type="entry name" value="AXH"/>
    <property type="match status" value="1"/>
</dbReference>
<dbReference type="PROSITE" id="PS50118">
    <property type="entry name" value="HMG_BOX_2"/>
    <property type="match status" value="1"/>
</dbReference>
<protein>
    <recommendedName>
        <fullName>HMG box-containing protein 1</fullName>
    </recommendedName>
    <alternativeName>
        <fullName>HMG box transcription factor 1</fullName>
    </alternativeName>
    <alternativeName>
        <fullName>High mobility group box transcription factor 1</fullName>
    </alternativeName>
</protein>
<comment type="function">
    <text evidence="1">Transcriptional repressor that binds to the promoter region of target genes. Plays a role in the regulation of the cell cycle and of the Wnt pathway. Binds preferentially to the sequence 5'-TTCATTCATTCA-3'. Binding to the histone H1.0 promoter is enhanced by interaction with RB1. Disrupts the interaction between DNA and TCF4 (By similarity).</text>
</comment>
<comment type="subunit">
    <text evidence="1 2">Binds TCF4 (By similarity). Binds RB1. Binds the second PAH repeat of SIN3A (By similarity).</text>
</comment>
<comment type="subcellular location">
    <subcellularLocation>
        <location evidence="3">Nucleus</location>
    </subcellularLocation>
</comment>
<comment type="tissue specificity">
    <text evidence="6">Highly expressed in liver, adipose tissue, lung, brain, spleen, kidney, skeletal muscle and heart.</text>
</comment>
<comment type="developmental stage">
    <text evidence="6">Not detectable in undifferentiated preadipocytes and myogenic cells. Accumulates at high levels during the terminal stages of the differentiation process.</text>
</comment>
<comment type="induction">
    <text evidence="6">Up-regulated by insulin in differentiated cultured adipocytes.</text>
</comment>
<comment type="PTM">
    <text evidence="1">Ubiquitinated by the CTLH E3 ubiquitin-protein ligase complex, leading to subsequent proteasomal degradation.</text>
</comment>
<organism>
    <name type="scientific">Rattus norvegicus</name>
    <name type="common">Rat</name>
    <dbReference type="NCBI Taxonomy" id="10116"/>
    <lineage>
        <taxon>Eukaryota</taxon>
        <taxon>Metazoa</taxon>
        <taxon>Chordata</taxon>
        <taxon>Craniata</taxon>
        <taxon>Vertebrata</taxon>
        <taxon>Euteleostomi</taxon>
        <taxon>Mammalia</taxon>
        <taxon>Eutheria</taxon>
        <taxon>Euarchontoglires</taxon>
        <taxon>Glires</taxon>
        <taxon>Rodentia</taxon>
        <taxon>Myomorpha</taxon>
        <taxon>Muroidea</taxon>
        <taxon>Muridae</taxon>
        <taxon>Murinae</taxon>
        <taxon>Rattus</taxon>
    </lineage>
</organism>
<sequence length="513" mass="57430">MVWEVKTNQRPHAVQRLLLVMDERATGVSDSLELLQCNENVPSSPGYNSCDEHMELDDLPELQAVQSDPTQSAIYQLSSDVSHQEYPRPSWSQNTSDIPENTHREDEVDWLTELANIATSPQSPLMQCSFYNRSSPVHIIATSKSLHSYARPPPVSSAKSGPAFPHDHWKEETPVRHERANSESESGIFCMSSLSDDDDLGWCNSWPSTVWHCFLKGTRLCFHKESKKEWQDVEDFARAASCDEEEIQMGTHKGYGSDGLKLLSHEESVSFGESVLKLTFDPGTVEDGLLTVECKLDHPFYVKNKGWSSFYPSLTVVQHGIPCCEIHIGDVCLPPGHPDAINFDDSGVFDTFKSYDFTPMDSSAVYVLSSMARQRRASLSCGGPGTGQEFAGSEFSKSCGSPGSSQLSSSSLYTKAVKSHSSGTVSATSPNKCKRPMNAFMLFAKKYRVEYTQMYPGKDNRAISVILGDRWKKMKNEERRMYTLEAKALAEEQKRLNPDCWKRKRTNSGSQQH</sequence>
<keyword id="KW-0238">DNA-binding</keyword>
<keyword id="KW-0539">Nucleus</keyword>
<keyword id="KW-1185">Reference proteome</keyword>
<keyword id="KW-0678">Repressor</keyword>
<keyword id="KW-0804">Transcription</keyword>
<keyword id="KW-0805">Transcription regulation</keyword>
<keyword id="KW-0832">Ubl conjugation</keyword>
<keyword id="KW-0879">Wnt signaling pathway</keyword>
<reference key="1">
    <citation type="journal article" date="1994" name="Nucleic Acids Res.">
        <title>Expression cloning in K+ transport defective yeast and distribution of HBP1, a new putative HMG transcriptional regulator.</title>
        <authorList>
            <person name="Lesage F."/>
            <person name="Hugnot J.-P."/>
            <person name="Amri E.-Z."/>
            <person name="Grimaldi P."/>
            <person name="Barhanin J."/>
            <person name="Lazdunski M."/>
        </authorList>
    </citation>
    <scope>NUCLEOTIDE SEQUENCE [MRNA]</scope>
    <scope>DEVELOPMENTAL STAGE</scope>
    <scope>INDUCTION</scope>
    <scope>TISSUE SPECIFICITY</scope>
    <source>
        <tissue>Brain</tissue>
    </source>
</reference>
<reference key="2">
    <citation type="journal article" date="2004" name="Genome Res.">
        <title>The status, quality, and expansion of the NIH full-length cDNA project: the Mammalian Gene Collection (MGC).</title>
        <authorList>
            <consortium name="The MGC Project Team"/>
        </authorList>
    </citation>
    <scope>NUCLEOTIDE SEQUENCE [LARGE SCALE MRNA]</scope>
    <source>
        <tissue>Lung</tissue>
    </source>
</reference>
<reference key="3">
    <citation type="journal article" date="1997" name="Oncogene">
        <title>The HMG-box transcription factor HBP1 is targeted by the pocket proteins and E1A.</title>
        <authorList>
            <person name="Lavender P."/>
            <person name="Vandel L."/>
            <person name="Bannister A.J."/>
            <person name="Kouzarides T."/>
        </authorList>
    </citation>
    <scope>INTERACTION WITH RB1</scope>
</reference>
<reference key="4">
    <citation type="journal article" date="2012" name="Nat. Commun.">
        <title>Quantitative maps of protein phosphorylation sites across 14 different rat organs and tissues.</title>
        <authorList>
            <person name="Lundby A."/>
            <person name="Secher A."/>
            <person name="Lage K."/>
            <person name="Nordsborg N.B."/>
            <person name="Dmytriyev A."/>
            <person name="Lundby C."/>
            <person name="Olsen J.V."/>
        </authorList>
    </citation>
    <scope>IDENTIFICATION BY MASS SPECTROMETRY [LARGE SCALE ANALYSIS]</scope>
</reference>
<gene>
    <name type="primary">Hbp1</name>
</gene>
<feature type="chain" id="PRO_0000048549" description="HMG box-containing protein 1">
    <location>
        <begin position="1"/>
        <end position="513"/>
    </location>
</feature>
<feature type="domain" description="AXH" evidence="4">
    <location>
        <begin position="202"/>
        <end position="343"/>
    </location>
</feature>
<feature type="DNA-binding region" description="HMG box" evidence="3">
    <location>
        <begin position="433"/>
        <end position="501"/>
    </location>
</feature>
<feature type="region of interest" description="Disordered" evidence="5">
    <location>
        <begin position="151"/>
        <end position="181"/>
    </location>
</feature>
<feature type="compositionally biased region" description="Basic and acidic residues" evidence="5">
    <location>
        <begin position="165"/>
        <end position="181"/>
    </location>
</feature>
<feature type="sequence conflict" description="In Ref. 1; AAA53240." evidence="7" ref="1">
    <original>K</original>
    <variation>N</variation>
    <location>
        <position position="144"/>
    </location>
</feature>
<feature type="sequence conflict" description="In Ref. 1; AAA53240." evidence="7" ref="1">
    <original>S</original>
    <variation>T</variation>
    <location>
        <position position="241"/>
    </location>
</feature>
<accession>Q62661</accession>
<accession>Q5BK86</accession>